<protein>
    <recommendedName>
        <fullName>Allophycocyanin subunit beta-18</fullName>
        <shortName>Allophycocyanin subunit B18</shortName>
    </recommendedName>
</protein>
<organism>
    <name type="scientific">Pyropia yezoensis</name>
    <name type="common">Susabi-nori</name>
    <name type="synonym">Porphyra yezoensis</name>
    <dbReference type="NCBI Taxonomy" id="2788"/>
    <lineage>
        <taxon>Eukaryota</taxon>
        <taxon>Rhodophyta</taxon>
        <taxon>Bangiophyceae</taxon>
        <taxon>Bangiales</taxon>
        <taxon>Bangiaceae</taxon>
        <taxon>Pyropia</taxon>
    </lineage>
</organism>
<dbReference type="EMBL" id="AP006715">
    <property type="protein sequence ID" value="BAE92340.1"/>
    <property type="molecule type" value="Genomic_DNA"/>
</dbReference>
<dbReference type="RefSeq" id="YP_536897.1">
    <property type="nucleotide sequence ID" value="NC_007932.1"/>
</dbReference>
<dbReference type="SMR" id="Q1XDS1"/>
<dbReference type="GeneID" id="3978831"/>
<dbReference type="GO" id="GO:0009535">
    <property type="term" value="C:chloroplast thylakoid membrane"/>
    <property type="evidence" value="ECO:0007669"/>
    <property type="project" value="UniProtKB-SubCell"/>
</dbReference>
<dbReference type="GO" id="GO:0030089">
    <property type="term" value="C:phycobilisome"/>
    <property type="evidence" value="ECO:0007669"/>
    <property type="project" value="UniProtKB-KW"/>
</dbReference>
<dbReference type="GO" id="GO:0015979">
    <property type="term" value="P:photosynthesis"/>
    <property type="evidence" value="ECO:0007669"/>
    <property type="project" value="UniProtKB-KW"/>
</dbReference>
<dbReference type="CDD" id="cd12126">
    <property type="entry name" value="APC_beta"/>
    <property type="match status" value="1"/>
</dbReference>
<dbReference type="Gene3D" id="1.10.490.20">
    <property type="entry name" value="Phycocyanins"/>
    <property type="match status" value="1"/>
</dbReference>
<dbReference type="InterPro" id="IPR006245">
    <property type="entry name" value="Allophycocyanin_b"/>
</dbReference>
<dbReference type="InterPro" id="IPR009050">
    <property type="entry name" value="Globin-like_sf"/>
</dbReference>
<dbReference type="InterPro" id="IPR012128">
    <property type="entry name" value="Phycobilisome_asu/bsu"/>
</dbReference>
<dbReference type="InterPro" id="IPR038719">
    <property type="entry name" value="Phycobilisome_asu/bsu_sf"/>
</dbReference>
<dbReference type="NCBIfam" id="TIGR01337">
    <property type="entry name" value="apcB"/>
    <property type="match status" value="1"/>
</dbReference>
<dbReference type="PANTHER" id="PTHR34011:SF3">
    <property type="entry name" value="ALLOPHYCOCYANIN BETA CHAIN"/>
    <property type="match status" value="1"/>
</dbReference>
<dbReference type="PANTHER" id="PTHR34011">
    <property type="entry name" value="PHYCOBILISOME 32.1 KDA LINKER POLYPEPTIDE, PHYCOCYANIN-ASSOCIATED, ROD 2-RELATED"/>
    <property type="match status" value="1"/>
</dbReference>
<dbReference type="Pfam" id="PF00502">
    <property type="entry name" value="Phycobilisome"/>
    <property type="match status" value="1"/>
</dbReference>
<dbReference type="PIRSF" id="PIRSF000081">
    <property type="entry name" value="Phycocyanin"/>
    <property type="match status" value="1"/>
</dbReference>
<dbReference type="SUPFAM" id="SSF46458">
    <property type="entry name" value="Globin-like"/>
    <property type="match status" value="1"/>
</dbReference>
<proteinExistence type="inferred from homology"/>
<evidence type="ECO:0000250" key="1"/>
<evidence type="ECO:0000305" key="2"/>
<reference key="1">
    <citation type="submission" date="2003-11" db="EMBL/GenBank/DDBJ databases">
        <title>Whole genome sequence of Porphyra yezoensis chloroplast.</title>
        <authorList>
            <person name="Kunimoto M."/>
            <person name="Morishima K."/>
            <person name="Yoshikawa M."/>
            <person name="Fukuda S."/>
            <person name="Kobayashi T."/>
            <person name="Kobayashi M."/>
            <person name="Okazaki T."/>
            <person name="Ohara I."/>
            <person name="Nakayama I."/>
        </authorList>
    </citation>
    <scope>NUCLEOTIDE SEQUENCE [LARGE SCALE GENOMIC DNA]</scope>
    <source>
        <strain>U-51</strain>
    </source>
</reference>
<keyword id="KW-0042">Antenna complex</keyword>
<keyword id="KW-0089">Bile pigment</keyword>
<keyword id="KW-0150">Chloroplast</keyword>
<keyword id="KW-0157">Chromophore</keyword>
<keyword id="KW-0249">Electron transport</keyword>
<keyword id="KW-0472">Membrane</keyword>
<keyword id="KW-0488">Methylation</keyword>
<keyword id="KW-0602">Photosynthesis</keyword>
<keyword id="KW-0605">Phycobilisome</keyword>
<keyword id="KW-0934">Plastid</keyword>
<keyword id="KW-0793">Thylakoid</keyword>
<keyword id="KW-0813">Transport</keyword>
<feature type="chain" id="PRO_0000277330" description="Allophycocyanin subunit beta-18">
    <location>
        <begin position="1"/>
        <end position="169"/>
    </location>
</feature>
<feature type="binding site" description="covalent" evidence="1">
    <location>
        <position position="82"/>
    </location>
    <ligand>
        <name>(2R,3E)-phycocyanobilin</name>
        <dbReference type="ChEBI" id="CHEBI:85275"/>
    </ligand>
</feature>
<feature type="modified residue" description="N4-methylasparagine" evidence="1">
    <location>
        <position position="72"/>
    </location>
</feature>
<accession>Q1XDS1</accession>
<gene>
    <name type="primary">apcF</name>
</gene>
<geneLocation type="chloroplast"/>
<name>APCF_PYRYE</name>
<sequence length="169" mass="19161">MQDAITAILNRYDLTGRYLDKTAVGQLESFFSSGLDRIKIAEIINDQATNILKEAAAQLYEEQPELLRPGGNSYTTRRYAACLRDIEYYLRYASYALVSGSTNILDQRVLNGLKDTYNSLSVPVAPTVRSIQLLQEIIEEELDLQSIKRTDIIQEPFQHLINALSEQDL</sequence>
<comment type="function">
    <text evidence="1">Light-harvesting photosynthetic bile pigment-protein from the phycobiliprotein complex. Allophycocyanin has a maximum absorption at approximately 650 nanometers (By similarity).</text>
</comment>
<comment type="subunit">
    <text evidence="1">Heterodimer of an alpha and a beta chain.</text>
</comment>
<comment type="subcellular location">
    <subcellularLocation>
        <location evidence="1">Plastid</location>
        <location evidence="1">Chloroplast thylakoid membrane</location>
        <topology evidence="1">Peripheral membrane protein</topology>
        <orientation evidence="1">Stromal side</orientation>
    </subcellularLocation>
    <text evidence="1">Forms the core of the phycobilisome.</text>
</comment>
<comment type="PTM">
    <text evidence="1">Contains one covalently linked bilin chromophore.</text>
</comment>
<comment type="similarity">
    <text evidence="2">Belongs to the phycobiliprotein family.</text>
</comment>